<accession>Q6ZKL8</accession>
<accession>A0A0P0XHL7</accession>
<reference key="1">
    <citation type="journal article" date="2005" name="Nature">
        <title>The map-based sequence of the rice genome.</title>
        <authorList>
            <consortium name="International rice genome sequencing project (IRGSP)"/>
        </authorList>
    </citation>
    <scope>NUCLEOTIDE SEQUENCE [LARGE SCALE GENOMIC DNA]</scope>
    <source>
        <strain>cv. Nipponbare</strain>
    </source>
</reference>
<reference key="2">
    <citation type="journal article" date="2008" name="Nucleic Acids Res.">
        <title>The rice annotation project database (RAP-DB): 2008 update.</title>
        <authorList>
            <consortium name="The rice annotation project (RAP)"/>
        </authorList>
    </citation>
    <scope>GENOME REANNOTATION</scope>
    <source>
        <strain>cv. Nipponbare</strain>
    </source>
</reference>
<reference key="3">
    <citation type="journal article" date="2013" name="Rice">
        <title>Improvement of the Oryza sativa Nipponbare reference genome using next generation sequence and optical map data.</title>
        <authorList>
            <person name="Kawahara Y."/>
            <person name="de la Bastide M."/>
            <person name="Hamilton J.P."/>
            <person name="Kanamori H."/>
            <person name="McCombie W.R."/>
            <person name="Ouyang S."/>
            <person name="Schwartz D.C."/>
            <person name="Tanaka T."/>
            <person name="Wu J."/>
            <person name="Zhou S."/>
            <person name="Childs K.L."/>
            <person name="Davidson R.M."/>
            <person name="Lin H."/>
            <person name="Quesada-Ocampo L."/>
            <person name="Vaillancourt B."/>
            <person name="Sakai H."/>
            <person name="Lee S.S."/>
            <person name="Kim J."/>
            <person name="Numa H."/>
            <person name="Itoh T."/>
            <person name="Buell C.R."/>
            <person name="Matsumoto T."/>
        </authorList>
    </citation>
    <scope>GENOME REANNOTATION</scope>
    <source>
        <strain>cv. Nipponbare</strain>
    </source>
</reference>
<reference key="4">
    <citation type="journal article" date="2005" name="PLoS Biol.">
        <title>The genomes of Oryza sativa: a history of duplications.</title>
        <authorList>
            <person name="Yu J."/>
            <person name="Wang J."/>
            <person name="Lin W."/>
            <person name="Li S."/>
            <person name="Li H."/>
            <person name="Zhou J."/>
            <person name="Ni P."/>
            <person name="Dong W."/>
            <person name="Hu S."/>
            <person name="Zeng C."/>
            <person name="Zhang J."/>
            <person name="Zhang Y."/>
            <person name="Li R."/>
            <person name="Xu Z."/>
            <person name="Li S."/>
            <person name="Li X."/>
            <person name="Zheng H."/>
            <person name="Cong L."/>
            <person name="Lin L."/>
            <person name="Yin J."/>
            <person name="Geng J."/>
            <person name="Li G."/>
            <person name="Shi J."/>
            <person name="Liu J."/>
            <person name="Lv H."/>
            <person name="Li J."/>
            <person name="Wang J."/>
            <person name="Deng Y."/>
            <person name="Ran L."/>
            <person name="Shi X."/>
            <person name="Wang X."/>
            <person name="Wu Q."/>
            <person name="Li C."/>
            <person name="Ren X."/>
            <person name="Wang J."/>
            <person name="Wang X."/>
            <person name="Li D."/>
            <person name="Liu D."/>
            <person name="Zhang X."/>
            <person name="Ji Z."/>
            <person name="Zhao W."/>
            <person name="Sun Y."/>
            <person name="Zhang Z."/>
            <person name="Bao J."/>
            <person name="Han Y."/>
            <person name="Dong L."/>
            <person name="Ji J."/>
            <person name="Chen P."/>
            <person name="Wu S."/>
            <person name="Liu J."/>
            <person name="Xiao Y."/>
            <person name="Bu D."/>
            <person name="Tan J."/>
            <person name="Yang L."/>
            <person name="Ye C."/>
            <person name="Zhang J."/>
            <person name="Xu J."/>
            <person name="Zhou Y."/>
            <person name="Yu Y."/>
            <person name="Zhang B."/>
            <person name="Zhuang S."/>
            <person name="Wei H."/>
            <person name="Liu B."/>
            <person name="Lei M."/>
            <person name="Yu H."/>
            <person name="Li Y."/>
            <person name="Xu H."/>
            <person name="Wei S."/>
            <person name="He X."/>
            <person name="Fang L."/>
            <person name="Zhang Z."/>
            <person name="Zhang Y."/>
            <person name="Huang X."/>
            <person name="Su Z."/>
            <person name="Tong W."/>
            <person name="Li J."/>
            <person name="Tong Z."/>
            <person name="Li S."/>
            <person name="Ye J."/>
            <person name="Wang L."/>
            <person name="Fang L."/>
            <person name="Lei T."/>
            <person name="Chen C.-S."/>
            <person name="Chen H.-C."/>
            <person name="Xu Z."/>
            <person name="Li H."/>
            <person name="Huang H."/>
            <person name="Zhang F."/>
            <person name="Xu H."/>
            <person name="Li N."/>
            <person name="Zhao C."/>
            <person name="Li S."/>
            <person name="Dong L."/>
            <person name="Huang Y."/>
            <person name="Li L."/>
            <person name="Xi Y."/>
            <person name="Qi Q."/>
            <person name="Li W."/>
            <person name="Zhang B."/>
            <person name="Hu W."/>
            <person name="Zhang Y."/>
            <person name="Tian X."/>
            <person name="Jiao Y."/>
            <person name="Liang X."/>
            <person name="Jin J."/>
            <person name="Gao L."/>
            <person name="Zheng W."/>
            <person name="Hao B."/>
            <person name="Liu S.-M."/>
            <person name="Wang W."/>
            <person name="Yuan L."/>
            <person name="Cao M."/>
            <person name="McDermott J."/>
            <person name="Samudrala R."/>
            <person name="Wang J."/>
            <person name="Wong G.K.-S."/>
            <person name="Yang H."/>
        </authorList>
    </citation>
    <scope>NUCLEOTIDE SEQUENCE [LARGE SCALE GENOMIC DNA]</scope>
    <source>
        <strain>cv. Nipponbare</strain>
    </source>
</reference>
<reference key="5">
    <citation type="journal article" date="2003" name="Science">
        <title>Collection, mapping, and annotation of over 28,000 cDNA clones from japonica rice.</title>
        <authorList>
            <consortium name="The rice full-length cDNA consortium"/>
        </authorList>
    </citation>
    <scope>NUCLEOTIDE SEQUENCE [LARGE SCALE MRNA]</scope>
    <source>
        <strain>cv. Nipponbare</strain>
    </source>
</reference>
<reference key="6">
    <citation type="journal article" date="2008" name="BMC Genomics">
        <title>Genome-wide and expression analysis of protein phosphatase 2C in rice and Arabidopsis.</title>
        <authorList>
            <person name="Xue T."/>
            <person name="Wang D."/>
            <person name="Zhang S."/>
            <person name="Ehlting J."/>
            <person name="Ni F."/>
            <person name="Jacab S."/>
            <person name="Zheng C."/>
            <person name="Zhong Y."/>
        </authorList>
    </citation>
    <scope>GENE FAMILY</scope>
    <scope>NOMENCLATURE</scope>
</reference>
<protein>
    <recommendedName>
        <fullName>Probable protein phosphatase 2C 66</fullName>
        <shortName>OsPP2C66</shortName>
        <ecNumber>3.1.3.16</ecNumber>
    </recommendedName>
</protein>
<evidence type="ECO:0000250" key="1"/>
<evidence type="ECO:0000255" key="2">
    <source>
        <dbReference type="PROSITE-ProRule" id="PRU01082"/>
    </source>
</evidence>
<evidence type="ECO:0000256" key="3">
    <source>
        <dbReference type="SAM" id="MobiDB-lite"/>
    </source>
</evidence>
<evidence type="ECO:0000305" key="4"/>
<organism>
    <name type="scientific">Oryza sativa subsp. japonica</name>
    <name type="common">Rice</name>
    <dbReference type="NCBI Taxonomy" id="39947"/>
    <lineage>
        <taxon>Eukaryota</taxon>
        <taxon>Viridiplantae</taxon>
        <taxon>Streptophyta</taxon>
        <taxon>Embryophyta</taxon>
        <taxon>Tracheophyta</taxon>
        <taxon>Spermatophyta</taxon>
        <taxon>Magnoliopsida</taxon>
        <taxon>Liliopsida</taxon>
        <taxon>Poales</taxon>
        <taxon>Poaceae</taxon>
        <taxon>BOP clade</taxon>
        <taxon>Oryzoideae</taxon>
        <taxon>Oryzeae</taxon>
        <taxon>Oryzinae</taxon>
        <taxon>Oryza</taxon>
        <taxon>Oryza sativa</taxon>
    </lineage>
</organism>
<sequence>MGSCLSSDLPPRAGAGAGASPGWPQRWRRRRQRGVERGGAVSGGGGGVFSIGVGGKKLHHGGGGGGEMTEEELAKVEGRVCVNGASAAACLHTQQGRKGTNQDAMVVWENFNTSDSVFCGVFDGHGPYGHFVAKKVRDSLPVKIRTLWKTSANEDTSSHQNGSISGSVNSEESPVVDDEWGEYADDSEKLPEMFLPLKQSYFKAFKLMDKELKMHPTVDCFCSGSTAVTLVKQGLDLVVGNLGDSRAIMGTRDAANNLTAVQLTVDLKPNLPREAARIQQCRGRVFALQDEPEVARVWLPNNDSPGLAMARAFGDFCLKDYGLISVPQISYRRLTEKDEFIILATDGVWDVLSNKEAVDIVAAAPSRATAARALVDCAVRSWRLKFPTSKSDDCAVVCLFLDHAKSPDLIQENESEEETTEDVAIPDTVAKVDQDIAQGDAHISSEEQITEPALQHSYTLRDVDEIVPVEEPPVSKEPERCGSARSLADCISTNEEEEWSALEGVTRVNSLLNLPRILSGEKRSTSWRKRR</sequence>
<proteinExistence type="evidence at transcript level"/>
<dbReference type="EC" id="3.1.3.16"/>
<dbReference type="EMBL" id="AP003873">
    <property type="protein sequence ID" value="BAD08814.1"/>
    <property type="molecule type" value="Genomic_DNA"/>
</dbReference>
<dbReference type="EMBL" id="AP008214">
    <property type="protein sequence ID" value="BAF24069.1"/>
    <property type="molecule type" value="Genomic_DNA"/>
</dbReference>
<dbReference type="EMBL" id="AP014964">
    <property type="protein sequence ID" value="BAT06108.1"/>
    <property type="molecule type" value="Genomic_DNA"/>
</dbReference>
<dbReference type="EMBL" id="CM000145">
    <property type="protein sequence ID" value="EAZ43231.1"/>
    <property type="molecule type" value="Genomic_DNA"/>
</dbReference>
<dbReference type="EMBL" id="AK073076">
    <property type="protein sequence ID" value="BAG93275.1"/>
    <property type="molecule type" value="mRNA"/>
</dbReference>
<dbReference type="RefSeq" id="XP_015650128.1">
    <property type="nucleotide sequence ID" value="XM_015794642.1"/>
</dbReference>
<dbReference type="SMR" id="Q6ZKL8"/>
<dbReference type="FunCoup" id="Q6ZKL8">
    <property type="interactions" value="76"/>
</dbReference>
<dbReference type="STRING" id="39947.Q6ZKL8"/>
<dbReference type="PaxDb" id="39947-Q6ZKL8"/>
<dbReference type="EnsemblPlants" id="Os08t0500300-01">
    <property type="protein sequence ID" value="Os08t0500300-01"/>
    <property type="gene ID" value="Os08g0500300"/>
</dbReference>
<dbReference type="Gramene" id="Os08t0500300-01">
    <property type="protein sequence ID" value="Os08t0500300-01"/>
    <property type="gene ID" value="Os08g0500300"/>
</dbReference>
<dbReference type="KEGG" id="dosa:Os08g0500300"/>
<dbReference type="eggNOG" id="KOG0698">
    <property type="taxonomic scope" value="Eukaryota"/>
</dbReference>
<dbReference type="HOGENOM" id="CLU_013173_6_0_1"/>
<dbReference type="InParanoid" id="Q6ZKL8"/>
<dbReference type="OMA" id="SASRRKW"/>
<dbReference type="OrthoDB" id="10264738at2759"/>
<dbReference type="Proteomes" id="UP000000763">
    <property type="component" value="Chromosome 8"/>
</dbReference>
<dbReference type="Proteomes" id="UP000007752">
    <property type="component" value="Chromosome 8"/>
</dbReference>
<dbReference type="Proteomes" id="UP000059680">
    <property type="component" value="Chromosome 8"/>
</dbReference>
<dbReference type="GO" id="GO:0046872">
    <property type="term" value="F:metal ion binding"/>
    <property type="evidence" value="ECO:0007669"/>
    <property type="project" value="UniProtKB-KW"/>
</dbReference>
<dbReference type="GO" id="GO:0004722">
    <property type="term" value="F:protein serine/threonine phosphatase activity"/>
    <property type="evidence" value="ECO:0000318"/>
    <property type="project" value="GO_Central"/>
</dbReference>
<dbReference type="GO" id="GO:1902531">
    <property type="term" value="P:regulation of intracellular signal transduction"/>
    <property type="evidence" value="ECO:0000318"/>
    <property type="project" value="GO_Central"/>
</dbReference>
<dbReference type="CDD" id="cd00143">
    <property type="entry name" value="PP2Cc"/>
    <property type="match status" value="1"/>
</dbReference>
<dbReference type="FunFam" id="3.60.40.10:FF:000024">
    <property type="entry name" value="probable protein phosphatase 2C 33"/>
    <property type="match status" value="1"/>
</dbReference>
<dbReference type="Gene3D" id="3.60.40.10">
    <property type="entry name" value="PPM-type phosphatase domain"/>
    <property type="match status" value="1"/>
</dbReference>
<dbReference type="InterPro" id="IPR015655">
    <property type="entry name" value="PP2C"/>
</dbReference>
<dbReference type="InterPro" id="IPR036457">
    <property type="entry name" value="PPM-type-like_dom_sf"/>
</dbReference>
<dbReference type="InterPro" id="IPR001932">
    <property type="entry name" value="PPM-type_phosphatase-like_dom"/>
</dbReference>
<dbReference type="PANTHER" id="PTHR47992">
    <property type="entry name" value="PROTEIN PHOSPHATASE"/>
    <property type="match status" value="1"/>
</dbReference>
<dbReference type="Pfam" id="PF00481">
    <property type="entry name" value="PP2C"/>
    <property type="match status" value="1"/>
</dbReference>
<dbReference type="SMART" id="SM00332">
    <property type="entry name" value="PP2Cc"/>
    <property type="match status" value="1"/>
</dbReference>
<dbReference type="SUPFAM" id="SSF81606">
    <property type="entry name" value="PP2C-like"/>
    <property type="match status" value="1"/>
</dbReference>
<dbReference type="PROSITE" id="PS51746">
    <property type="entry name" value="PPM_2"/>
    <property type="match status" value="1"/>
</dbReference>
<gene>
    <name type="ordered locus">Os08g0500300</name>
    <name type="ordered locus">LOC_Os08g39100</name>
    <name type="ORF">OJ1118_A06.15</name>
    <name type="ORF">OsJ_026714</name>
</gene>
<feature type="chain" id="PRO_0000363313" description="Probable protein phosphatase 2C 66">
    <location>
        <begin position="1"/>
        <end position="531"/>
    </location>
</feature>
<feature type="domain" description="PPM-type phosphatase" evidence="2">
    <location>
        <begin position="88"/>
        <end position="401"/>
    </location>
</feature>
<feature type="region of interest" description="Disordered" evidence="3">
    <location>
        <begin position="1"/>
        <end position="47"/>
    </location>
</feature>
<feature type="region of interest" description="Disordered" evidence="3">
    <location>
        <begin position="151"/>
        <end position="176"/>
    </location>
</feature>
<feature type="compositionally biased region" description="Low complexity" evidence="3">
    <location>
        <begin position="10"/>
        <end position="25"/>
    </location>
</feature>
<feature type="compositionally biased region" description="Polar residues" evidence="3">
    <location>
        <begin position="151"/>
        <end position="172"/>
    </location>
</feature>
<feature type="binding site" evidence="1">
    <location>
        <position position="123"/>
    </location>
    <ligand>
        <name>Mn(2+)</name>
        <dbReference type="ChEBI" id="CHEBI:29035"/>
        <label>1</label>
    </ligand>
</feature>
<feature type="binding site" evidence="1">
    <location>
        <position position="123"/>
    </location>
    <ligand>
        <name>Mn(2+)</name>
        <dbReference type="ChEBI" id="CHEBI:29035"/>
        <label>2</label>
    </ligand>
</feature>
<feature type="binding site" evidence="1">
    <location>
        <position position="124"/>
    </location>
    <ligand>
        <name>Mn(2+)</name>
        <dbReference type="ChEBI" id="CHEBI:29035"/>
        <label>1</label>
    </ligand>
</feature>
<feature type="binding site" evidence="1">
    <location>
        <position position="346"/>
    </location>
    <ligand>
        <name>Mn(2+)</name>
        <dbReference type="ChEBI" id="CHEBI:29035"/>
        <label>2</label>
    </ligand>
</feature>
<feature type="binding site" evidence="1">
    <location>
        <position position="392"/>
    </location>
    <ligand>
        <name>Mn(2+)</name>
        <dbReference type="ChEBI" id="CHEBI:29035"/>
        <label>2</label>
    </ligand>
</feature>
<comment type="catalytic activity">
    <reaction>
        <text>O-phospho-L-seryl-[protein] + H2O = L-seryl-[protein] + phosphate</text>
        <dbReference type="Rhea" id="RHEA:20629"/>
        <dbReference type="Rhea" id="RHEA-COMP:9863"/>
        <dbReference type="Rhea" id="RHEA-COMP:11604"/>
        <dbReference type="ChEBI" id="CHEBI:15377"/>
        <dbReference type="ChEBI" id="CHEBI:29999"/>
        <dbReference type="ChEBI" id="CHEBI:43474"/>
        <dbReference type="ChEBI" id="CHEBI:83421"/>
        <dbReference type="EC" id="3.1.3.16"/>
    </reaction>
</comment>
<comment type="catalytic activity">
    <reaction>
        <text>O-phospho-L-threonyl-[protein] + H2O = L-threonyl-[protein] + phosphate</text>
        <dbReference type="Rhea" id="RHEA:47004"/>
        <dbReference type="Rhea" id="RHEA-COMP:11060"/>
        <dbReference type="Rhea" id="RHEA-COMP:11605"/>
        <dbReference type="ChEBI" id="CHEBI:15377"/>
        <dbReference type="ChEBI" id="CHEBI:30013"/>
        <dbReference type="ChEBI" id="CHEBI:43474"/>
        <dbReference type="ChEBI" id="CHEBI:61977"/>
        <dbReference type="EC" id="3.1.3.16"/>
    </reaction>
</comment>
<comment type="cofactor">
    <cofactor evidence="1">
        <name>Mg(2+)</name>
        <dbReference type="ChEBI" id="CHEBI:18420"/>
    </cofactor>
    <cofactor evidence="1">
        <name>Mn(2+)</name>
        <dbReference type="ChEBI" id="CHEBI:29035"/>
    </cofactor>
    <text evidence="1">Binds 2 magnesium or manganese ions per subunit.</text>
</comment>
<comment type="similarity">
    <text evidence="4">Belongs to the PP2C family.</text>
</comment>
<keyword id="KW-0378">Hydrolase</keyword>
<keyword id="KW-0460">Magnesium</keyword>
<keyword id="KW-0464">Manganese</keyword>
<keyword id="KW-0479">Metal-binding</keyword>
<keyword id="KW-0904">Protein phosphatase</keyword>
<keyword id="KW-1185">Reference proteome</keyword>
<name>P2C66_ORYSJ</name>